<proteinExistence type="inferred from homology"/>
<dbReference type="EC" id="2.4.99.28" evidence="2"/>
<dbReference type="EC" id="3.4.16.4" evidence="2"/>
<dbReference type="EMBL" id="BA000003">
    <property type="protein sequence ID" value="BAB12917.1"/>
    <property type="molecule type" value="Genomic_DNA"/>
</dbReference>
<dbReference type="RefSeq" id="NP_240031.1">
    <property type="nucleotide sequence ID" value="NC_002528.1"/>
</dbReference>
<dbReference type="RefSeq" id="WP_010895998.1">
    <property type="nucleotide sequence ID" value="NC_002528.1"/>
</dbReference>
<dbReference type="SMR" id="P57296"/>
<dbReference type="STRING" id="563178.BUAP5A_197"/>
<dbReference type="CAZy" id="GT51">
    <property type="family name" value="Glycosyltransferase Family 51"/>
</dbReference>
<dbReference type="EnsemblBacteria" id="BAB12917">
    <property type="protein sequence ID" value="BAB12917"/>
    <property type="gene ID" value="BAB12917"/>
</dbReference>
<dbReference type="KEGG" id="buc:BU200"/>
<dbReference type="PATRIC" id="fig|107806.10.peg.211"/>
<dbReference type="eggNOG" id="COG0744">
    <property type="taxonomic scope" value="Bacteria"/>
</dbReference>
<dbReference type="HOGENOM" id="CLU_006354_2_7_6"/>
<dbReference type="UniPathway" id="UPA00219"/>
<dbReference type="Proteomes" id="UP000001806">
    <property type="component" value="Chromosome"/>
</dbReference>
<dbReference type="GO" id="GO:0030288">
    <property type="term" value="C:outer membrane-bounded periplasmic space"/>
    <property type="evidence" value="ECO:0007669"/>
    <property type="project" value="TreeGrafter"/>
</dbReference>
<dbReference type="GO" id="GO:0009274">
    <property type="term" value="C:peptidoglycan-based cell wall"/>
    <property type="evidence" value="ECO:0007669"/>
    <property type="project" value="InterPro"/>
</dbReference>
<dbReference type="GO" id="GO:0005886">
    <property type="term" value="C:plasma membrane"/>
    <property type="evidence" value="ECO:0007669"/>
    <property type="project" value="UniProtKB-SubCell"/>
</dbReference>
<dbReference type="GO" id="GO:0008658">
    <property type="term" value="F:penicillin binding"/>
    <property type="evidence" value="ECO:0007669"/>
    <property type="project" value="InterPro"/>
</dbReference>
<dbReference type="GO" id="GO:0008955">
    <property type="term" value="F:peptidoglycan glycosyltransferase activity"/>
    <property type="evidence" value="ECO:0007669"/>
    <property type="project" value="InterPro"/>
</dbReference>
<dbReference type="GO" id="GO:0009002">
    <property type="term" value="F:serine-type D-Ala-D-Ala carboxypeptidase activity"/>
    <property type="evidence" value="ECO:0007669"/>
    <property type="project" value="UniProtKB-EC"/>
</dbReference>
<dbReference type="GO" id="GO:0071555">
    <property type="term" value="P:cell wall organization"/>
    <property type="evidence" value="ECO:0007669"/>
    <property type="project" value="UniProtKB-KW"/>
</dbReference>
<dbReference type="GO" id="GO:0009252">
    <property type="term" value="P:peptidoglycan biosynthetic process"/>
    <property type="evidence" value="ECO:0007669"/>
    <property type="project" value="UniProtKB-UniPathway"/>
</dbReference>
<dbReference type="GO" id="GO:0006508">
    <property type="term" value="P:proteolysis"/>
    <property type="evidence" value="ECO:0007669"/>
    <property type="project" value="UniProtKB-KW"/>
</dbReference>
<dbReference type="GO" id="GO:0008360">
    <property type="term" value="P:regulation of cell shape"/>
    <property type="evidence" value="ECO:0007669"/>
    <property type="project" value="UniProtKB-KW"/>
</dbReference>
<dbReference type="GO" id="GO:0046677">
    <property type="term" value="P:response to antibiotic"/>
    <property type="evidence" value="ECO:0007669"/>
    <property type="project" value="UniProtKB-KW"/>
</dbReference>
<dbReference type="FunFam" id="1.10.3810.10:FF:000002">
    <property type="entry name" value="Penicillin-binding protein 1B"/>
    <property type="match status" value="1"/>
</dbReference>
<dbReference type="Gene3D" id="1.10.3810.10">
    <property type="entry name" value="Biosynthetic peptidoglycan transglycosylase-like"/>
    <property type="match status" value="1"/>
</dbReference>
<dbReference type="Gene3D" id="3.40.710.10">
    <property type="entry name" value="DD-peptidase/beta-lactamase superfamily"/>
    <property type="match status" value="1"/>
</dbReference>
<dbReference type="Gene3D" id="3.30.2060.10">
    <property type="entry name" value="Penicillin-binding protein 1b domain"/>
    <property type="match status" value="1"/>
</dbReference>
<dbReference type="InterPro" id="IPR012338">
    <property type="entry name" value="Beta-lactam/transpept-like"/>
</dbReference>
<dbReference type="InterPro" id="IPR001264">
    <property type="entry name" value="Glyco_trans_51"/>
</dbReference>
<dbReference type="InterPro" id="IPR050396">
    <property type="entry name" value="Glycosyltr_51/Transpeptidase"/>
</dbReference>
<dbReference type="InterPro" id="IPR023346">
    <property type="entry name" value="Lysozyme-like_dom_sf"/>
</dbReference>
<dbReference type="InterPro" id="IPR011813">
    <property type="entry name" value="PBP_1b"/>
</dbReference>
<dbReference type="InterPro" id="IPR036950">
    <property type="entry name" value="PBP_transglycosylase"/>
</dbReference>
<dbReference type="InterPro" id="IPR001460">
    <property type="entry name" value="PCN-bd_Tpept"/>
</dbReference>
<dbReference type="InterPro" id="IPR028166">
    <property type="entry name" value="UB2H"/>
</dbReference>
<dbReference type="NCBIfam" id="TIGR02071">
    <property type="entry name" value="PBP_1b"/>
    <property type="match status" value="1"/>
</dbReference>
<dbReference type="NCBIfam" id="NF011423">
    <property type="entry name" value="PRK14850.1"/>
    <property type="match status" value="1"/>
</dbReference>
<dbReference type="PANTHER" id="PTHR32282">
    <property type="entry name" value="BINDING PROTEIN TRANSPEPTIDASE, PUTATIVE-RELATED"/>
    <property type="match status" value="1"/>
</dbReference>
<dbReference type="PANTHER" id="PTHR32282:SF11">
    <property type="entry name" value="PENICILLIN-BINDING PROTEIN 1B"/>
    <property type="match status" value="1"/>
</dbReference>
<dbReference type="Pfam" id="PF00912">
    <property type="entry name" value="Transgly"/>
    <property type="match status" value="1"/>
</dbReference>
<dbReference type="Pfam" id="PF00905">
    <property type="entry name" value="Transpeptidase"/>
    <property type="match status" value="1"/>
</dbReference>
<dbReference type="Pfam" id="PF14814">
    <property type="entry name" value="UB2H"/>
    <property type="match status" value="1"/>
</dbReference>
<dbReference type="PIRSF" id="PIRSF002799">
    <property type="entry name" value="PBP_1b"/>
    <property type="match status" value="1"/>
</dbReference>
<dbReference type="SUPFAM" id="SSF56601">
    <property type="entry name" value="beta-lactamase/transpeptidase-like"/>
    <property type="match status" value="1"/>
</dbReference>
<dbReference type="SUPFAM" id="SSF53955">
    <property type="entry name" value="Lysozyme-like"/>
    <property type="match status" value="1"/>
</dbReference>
<reference key="1">
    <citation type="journal article" date="2000" name="Nature">
        <title>Genome sequence of the endocellular bacterial symbiont of aphids Buchnera sp. APS.</title>
        <authorList>
            <person name="Shigenobu S."/>
            <person name="Watanabe H."/>
            <person name="Hattori M."/>
            <person name="Sakaki Y."/>
            <person name="Ishikawa H."/>
        </authorList>
    </citation>
    <scope>NUCLEOTIDE SEQUENCE [LARGE SCALE GENOMIC DNA]</scope>
    <source>
        <strain>APS</strain>
    </source>
</reference>
<organism>
    <name type="scientific">Buchnera aphidicola subsp. Acyrthosiphon pisum (strain APS)</name>
    <name type="common">Acyrthosiphon pisum symbiotic bacterium</name>
    <dbReference type="NCBI Taxonomy" id="107806"/>
    <lineage>
        <taxon>Bacteria</taxon>
        <taxon>Pseudomonadati</taxon>
        <taxon>Pseudomonadota</taxon>
        <taxon>Gammaproteobacteria</taxon>
        <taxon>Enterobacterales</taxon>
        <taxon>Erwiniaceae</taxon>
        <taxon>Buchnera</taxon>
    </lineage>
</organism>
<protein>
    <recommendedName>
        <fullName>Penicillin-binding protein 1B</fullName>
        <shortName>PBP-1b</shortName>
        <shortName>PBP1b</shortName>
    </recommendedName>
    <alternativeName>
        <fullName>Murein polymerase</fullName>
    </alternativeName>
    <domain>
        <recommendedName>
            <fullName>Penicillin-insensitive transglycosylase</fullName>
            <ecNumber evidence="2">2.4.99.28</ecNumber>
        </recommendedName>
        <alternativeName>
            <fullName>Peptidoglycan TGase</fullName>
        </alternativeName>
        <alternativeName>
            <fullName>Peptidoglycan glycosyltransferase</fullName>
        </alternativeName>
    </domain>
    <domain>
        <recommendedName>
            <fullName>Penicillin-sensitive transpeptidase</fullName>
            <ecNumber evidence="2">3.4.16.4</ecNumber>
        </recommendedName>
        <alternativeName>
            <fullName>DD-transpeptidase</fullName>
        </alternativeName>
    </domain>
</protein>
<name>PBPB_BUCAI</name>
<comment type="function">
    <text evidence="1">Cell wall formation. Synthesis of cross-linked peptidoglycan from the lipid intermediates. The enzyme has a penicillin-insensitive transglycosylase N-terminal domain (formation of linear glycan strands) and a penicillin-sensitive transpeptidase C-terminal domain (cross-linking of the peptide subunits) (By similarity).</text>
</comment>
<comment type="catalytic activity">
    <reaction evidence="2">
        <text>[GlcNAc-(1-&gt;4)-Mur2Ac(oyl-L-Ala-gamma-D-Glu-L-Lys-D-Ala-D-Ala)](n)-di-trans,octa-cis-undecaprenyl diphosphate + beta-D-GlcNAc-(1-&gt;4)-Mur2Ac(oyl-L-Ala-gamma-D-Glu-L-Lys-D-Ala-D-Ala)-di-trans,octa-cis-undecaprenyl diphosphate = [GlcNAc-(1-&gt;4)-Mur2Ac(oyl-L-Ala-gamma-D-Glu-L-Lys-D-Ala-D-Ala)](n+1)-di-trans,octa-cis-undecaprenyl diphosphate + di-trans,octa-cis-undecaprenyl diphosphate + H(+)</text>
        <dbReference type="Rhea" id="RHEA:23708"/>
        <dbReference type="Rhea" id="RHEA-COMP:9602"/>
        <dbReference type="Rhea" id="RHEA-COMP:9603"/>
        <dbReference type="ChEBI" id="CHEBI:15378"/>
        <dbReference type="ChEBI" id="CHEBI:58405"/>
        <dbReference type="ChEBI" id="CHEBI:60033"/>
        <dbReference type="ChEBI" id="CHEBI:78435"/>
        <dbReference type="EC" id="2.4.99.28"/>
    </reaction>
</comment>
<comment type="catalytic activity">
    <reaction evidence="2">
        <text>Preferential cleavage: (Ac)2-L-Lys-D-Ala-|-D-Ala. Also transpeptidation of peptidyl-alanyl moieties that are N-acyl substituents of D-alanine.</text>
        <dbReference type="EC" id="3.4.16.4"/>
    </reaction>
</comment>
<comment type="pathway">
    <text>Cell wall biogenesis; peptidoglycan biosynthesis.</text>
</comment>
<comment type="subcellular location">
    <subcellularLocation>
        <location evidence="1">Cell membrane</location>
        <topology evidence="1">Single-pass type II membrane protein</topology>
    </subcellularLocation>
</comment>
<comment type="similarity">
    <text evidence="4">In the N-terminal section; belongs to the glycosyltransferase 51 family.</text>
</comment>
<comment type="similarity">
    <text evidence="4">In the C-terminal section; belongs to the transpeptidase family.</text>
</comment>
<keyword id="KW-0046">Antibiotic resistance</keyword>
<keyword id="KW-0121">Carboxypeptidase</keyword>
<keyword id="KW-1003">Cell membrane</keyword>
<keyword id="KW-0133">Cell shape</keyword>
<keyword id="KW-0961">Cell wall biogenesis/degradation</keyword>
<keyword id="KW-0328">Glycosyltransferase</keyword>
<keyword id="KW-0378">Hydrolase</keyword>
<keyword id="KW-0472">Membrane</keyword>
<keyword id="KW-0511">Multifunctional enzyme</keyword>
<keyword id="KW-0573">Peptidoglycan synthesis</keyword>
<keyword id="KW-0645">Protease</keyword>
<keyword id="KW-1185">Reference proteome</keyword>
<keyword id="KW-0735">Signal-anchor</keyword>
<keyword id="KW-0808">Transferase</keyword>
<keyword id="KW-0812">Transmembrane</keyword>
<keyword id="KW-1133">Transmembrane helix</keyword>
<feature type="chain" id="PRO_0000083185" description="Penicillin-binding protein 1B">
    <location>
        <begin position="1"/>
        <end position="760"/>
    </location>
</feature>
<feature type="topological domain" description="Cytoplasmic" evidence="3">
    <location>
        <begin position="1"/>
        <end position="8"/>
    </location>
</feature>
<feature type="transmembrane region" description="Helical; Signal-anchor for type II membrane protein" evidence="3">
    <location>
        <begin position="9"/>
        <end position="29"/>
    </location>
</feature>
<feature type="topological domain" description="Extracellular" evidence="3">
    <location>
        <begin position="30"/>
        <end position="760"/>
    </location>
</feature>
<feature type="region of interest" description="Transglycosylase">
    <location>
        <begin position="136"/>
        <end position="308"/>
    </location>
</feature>
<feature type="region of interest" description="Transpeptidase">
    <location>
        <begin position="392"/>
        <end position="684"/>
    </location>
</feature>
<feature type="active site" description="Proton donor; for transglycosylase activity" evidence="2">
    <location>
        <position position="174"/>
    </location>
</feature>
<feature type="active site" description="Acyl-ester intermediate; for transpeptidase activity" evidence="2">
    <location>
        <position position="451"/>
    </location>
</feature>
<accession>P57296</accession>
<sequence>MFFNFKKYFLIKVFFFVLILTLCYGLYLYVKINRFINGKVWNFPTSIYGRIVNLEPGNSYSQKEVLHLLKSTMYRKVDLVMLPGEYSIKNNTIEFIRRAFDFPDIREDEFHARLYFNKDTLVKIKNIDNNHDFSFFRLEPKLIAMLKSPEAKKRMFIPRNQYPEMLVKTLLAIEDKYFYEHDGIHLSSIGRAFLVNLMAGRTIQGGSTLTQQLIKNLFLTNTRSILRKINEIYMALILDRFYTKDRILELYLNEVYLGQDGDEQIRGFPLASIYYFGRPINELNLEQYALLVGMVKGASLYSPWTNPNLALKRRNLVLFLLYKQKYITRKIYKDLCKRSLNVQPKGNIISSHPSFIQLVCEEFHKKIYNPIKNFPGTKIFTTLDYTSQNAVEQAVKIEIPILKRKKRLKDLEVAMIVIDRFTGEVQALIGSSKPEFNGYNRALKTRRSIGSLSKPITYLTALSQPEKYHLNTWISNYPLSIKLDSGQYWTPKNNNFSFSKKVLLLDALIHSINIPTVNLSINIGLKKLVDSWLLLGISKKYITPLPSISLGAINLTPFEIAQVFQIIGSGGYKSSLSSVRSIISDDGKVLYQNLPQSIHIESSEASYLTLYGMQQVVKSGTAKSLGTIFKEFSLAGKTGTTNNLVDNWFVGIDGKQIVITWIGRDNNHTTRLYSSSGAMQIYKRYLQYQRPVPLVLKAPNNINMFYINNLGELFCKKNNQHNRMLPIWSIKNKKICNDKLSERFSIKKKKNFLFWLKNLF</sequence>
<evidence type="ECO:0000250" key="1"/>
<evidence type="ECO:0000250" key="2">
    <source>
        <dbReference type="UniProtKB" id="P02919"/>
    </source>
</evidence>
<evidence type="ECO:0000255" key="3"/>
<evidence type="ECO:0000305" key="4"/>
<gene>
    <name type="primary">mrcB</name>
    <name type="ordered locus">BU200</name>
</gene>